<reference key="1">
    <citation type="journal article" date="2003" name="Proc. Natl. Acad. Sci. U.S.A.">
        <title>The complete genome sequence of Mycobacterium bovis.</title>
        <authorList>
            <person name="Garnier T."/>
            <person name="Eiglmeier K."/>
            <person name="Camus J.-C."/>
            <person name="Medina N."/>
            <person name="Mansoor H."/>
            <person name="Pryor M."/>
            <person name="Duthoy S."/>
            <person name="Grondin S."/>
            <person name="Lacroix C."/>
            <person name="Monsempe C."/>
            <person name="Simon S."/>
            <person name="Harris B."/>
            <person name="Atkin R."/>
            <person name="Doggett J."/>
            <person name="Mayes R."/>
            <person name="Keating L."/>
            <person name="Wheeler P.R."/>
            <person name="Parkhill J."/>
            <person name="Barrell B.G."/>
            <person name="Cole S.T."/>
            <person name="Gordon S.V."/>
            <person name="Hewinson R.G."/>
        </authorList>
    </citation>
    <scope>NUCLEOTIDE SEQUENCE [LARGE SCALE GENOMIC DNA]</scope>
    <source>
        <strain>ATCC BAA-935 / AF2122/97</strain>
    </source>
</reference>
<reference key="2">
    <citation type="journal article" date="2017" name="Genome Announc.">
        <title>Updated reference genome sequence and annotation of Mycobacterium bovis AF2122/97.</title>
        <authorList>
            <person name="Malone K.M."/>
            <person name="Farrell D."/>
            <person name="Stuber T.P."/>
            <person name="Schubert O.T."/>
            <person name="Aebersold R."/>
            <person name="Robbe-Austerman S."/>
            <person name="Gordon S.V."/>
        </authorList>
    </citation>
    <scope>NUCLEOTIDE SEQUENCE [LARGE SCALE GENOMIC DNA]</scope>
    <scope>GENOME REANNOTATION</scope>
    <source>
        <strain>ATCC BAA-935 / AF2122/97</strain>
    </source>
</reference>
<name>Y1321_MYCBO</name>
<proteinExistence type="predicted"/>
<accession>P0A5E4</accession>
<accession>A0A1R3XXY1</accession>
<accession>Q10616</accession>
<accession>X2BHN2</accession>
<feature type="chain" id="PRO_0000103790" description="Uncharacterized protein Mb1321c">
    <location>
        <begin position="1"/>
        <end position="521"/>
    </location>
</feature>
<feature type="transmembrane region" description="Helical" evidence="1">
    <location>
        <begin position="68"/>
        <end position="88"/>
    </location>
</feature>
<feature type="transmembrane region" description="Helical" evidence="1">
    <location>
        <begin position="114"/>
        <end position="134"/>
    </location>
</feature>
<feature type="transmembrane region" description="Helical" evidence="1">
    <location>
        <begin position="160"/>
        <end position="180"/>
    </location>
</feature>
<feature type="transmembrane region" description="Helical" evidence="1">
    <location>
        <begin position="192"/>
        <end position="212"/>
    </location>
</feature>
<feature type="transmembrane region" description="Helical" evidence="1">
    <location>
        <begin position="290"/>
        <end position="310"/>
    </location>
</feature>
<feature type="transmembrane region" description="Helical" evidence="1">
    <location>
        <begin position="399"/>
        <end position="419"/>
    </location>
</feature>
<feature type="region of interest" description="Disordered" evidence="2">
    <location>
        <begin position="1"/>
        <end position="25"/>
    </location>
</feature>
<gene>
    <name type="ordered locus">BQ2027_MB1321C</name>
</gene>
<protein>
    <recommendedName>
        <fullName>Uncharacterized protein Mb1321c</fullName>
    </recommendedName>
</protein>
<sequence length="521" mass="56028">MLQRSLGVNGRKLAMSARSAKRERKNASTAASKCYVVPPSARGWVHAYSVTATSMLNRRKAILDYLQGAVWVLPTFGVAIGLGSGAVLSMIPVKSGTLIDKLMFQGTPGDARGVLIVVSATMITTIGIVFSLTVLSLQIASSQFSVRLLRTFLRDVPNQVVLAIFACTFAYSTGGLHTVGEHRDGGAFIPKVAVTGSLALAFVSIAALIYFLHHLMHSIQIDTIMDKVRLRTLGLVDQLYPESDTADRQVETPPSPPADAVPLLAPHSGYLQTVDVDDIAELAAASRYTALLVTFVGDYVTAGGLLGWCWRRGTAPGAPGSDFPQRCLRHVHIGFERTLQQDIRFGLRQMVDIALRALSPALNDPYTAIQVVHHLSAVESVLASRALPDDVRRDRAGELLFWLPYPSFATYLHVGCAQIRRYGSREPLVLTALLQLLSAVAQNCVDPSRRVAVQTQIALVVRAAQREFADESDRAMVLGAAARATEVVERPGTLAPPPSTFGQVAAAQAAASTIRSADRDG</sequence>
<organism>
    <name type="scientific">Mycobacterium bovis (strain ATCC BAA-935 / AF2122/97)</name>
    <dbReference type="NCBI Taxonomy" id="233413"/>
    <lineage>
        <taxon>Bacteria</taxon>
        <taxon>Bacillati</taxon>
        <taxon>Actinomycetota</taxon>
        <taxon>Actinomycetes</taxon>
        <taxon>Mycobacteriales</taxon>
        <taxon>Mycobacteriaceae</taxon>
        <taxon>Mycobacterium</taxon>
        <taxon>Mycobacterium tuberculosis complex</taxon>
    </lineage>
</organism>
<comment type="subcellular location">
    <subcellularLocation>
        <location evidence="3">Cell membrane</location>
        <topology evidence="3">Multi-pass membrane protein</topology>
    </subcellularLocation>
</comment>
<keyword id="KW-1003">Cell membrane</keyword>
<keyword id="KW-0472">Membrane</keyword>
<keyword id="KW-1185">Reference proteome</keyword>
<keyword id="KW-0812">Transmembrane</keyword>
<keyword id="KW-1133">Transmembrane helix</keyword>
<evidence type="ECO:0000255" key="1"/>
<evidence type="ECO:0000256" key="2">
    <source>
        <dbReference type="SAM" id="MobiDB-lite"/>
    </source>
</evidence>
<evidence type="ECO:0000305" key="3"/>
<dbReference type="EMBL" id="LT708304">
    <property type="protein sequence ID" value="SIT99924.1"/>
    <property type="molecule type" value="Genomic_DNA"/>
</dbReference>
<dbReference type="RefSeq" id="NP_854975.1">
    <property type="nucleotide sequence ID" value="NC_002945.3"/>
</dbReference>
<dbReference type="RefSeq" id="WP_003406627.1">
    <property type="nucleotide sequence ID" value="NC_002945.4"/>
</dbReference>
<dbReference type="KEGG" id="mbo:BQ2027_MB1321C"/>
<dbReference type="PATRIC" id="fig|233413.5.peg.1447"/>
<dbReference type="Proteomes" id="UP000001419">
    <property type="component" value="Chromosome"/>
</dbReference>
<dbReference type="GO" id="GO:0005886">
    <property type="term" value="C:plasma membrane"/>
    <property type="evidence" value="ECO:0007669"/>
    <property type="project" value="UniProtKB-SubCell"/>
</dbReference>
<dbReference type="InterPro" id="IPR018723">
    <property type="entry name" value="DUF2254_membrane"/>
</dbReference>
<dbReference type="Pfam" id="PF10011">
    <property type="entry name" value="DUF2254"/>
    <property type="match status" value="1"/>
</dbReference>